<keyword id="KW-0963">Cytoplasm</keyword>
<keyword id="KW-0570">Pentose shunt</keyword>
<keyword id="KW-1185">Reference proteome</keyword>
<keyword id="KW-0704">Schiff base</keyword>
<keyword id="KW-0808">Transferase</keyword>
<sequence length="316" mass="35707">MNELDGIKQFTTVVADSGDIESIRHYHPQDATTNPSLLLKAAGLSQYEHLIDDAIAWGKKNGKTQEQQVVAACDKLAVNFGAEILKIVPGRVSTEVDARLSFDKEKSIEKARHLVDLYQQQGVEKSRILIKLASTWEGIRAAEELEKEGINCNLTLLFSFAQARACAEAGVFLISPFVGRIYDWYQARKPMDPYVVEEDPGVKSVRNIYDYYKQHHYETIVMGASFRRTEQILALTGCDRLTIAPNLLKELQEKVSPVVRKLIPPSQTFPRPAPMSEAEFRWEHNQYAMAVEKLSEGIRLFAVDQRKLEDLLAAKL</sequence>
<gene>
    <name evidence="2" type="primary">tal2</name>
    <name type="ordered locus">SSON_2544</name>
</gene>
<organism>
    <name type="scientific">Shigella sonnei (strain Ss046)</name>
    <dbReference type="NCBI Taxonomy" id="300269"/>
    <lineage>
        <taxon>Bacteria</taxon>
        <taxon>Pseudomonadati</taxon>
        <taxon>Pseudomonadota</taxon>
        <taxon>Gammaproteobacteria</taxon>
        <taxon>Enterobacterales</taxon>
        <taxon>Enterobacteriaceae</taxon>
        <taxon>Shigella</taxon>
    </lineage>
</organism>
<feature type="chain" id="PRO_0000230974" description="Transaldolase 2">
    <location>
        <begin position="1"/>
        <end position="316"/>
    </location>
</feature>
<feature type="active site" description="Schiff-base intermediate with substrate" evidence="2">
    <location>
        <position position="131"/>
    </location>
</feature>
<proteinExistence type="inferred from homology"/>
<protein>
    <recommendedName>
        <fullName evidence="2">Transaldolase 2</fullName>
        <ecNumber evidence="2">2.2.1.2</ecNumber>
    </recommendedName>
</protein>
<evidence type="ECO:0000250" key="1"/>
<evidence type="ECO:0000255" key="2">
    <source>
        <dbReference type="HAMAP-Rule" id="MF_00492"/>
    </source>
</evidence>
<reference key="1">
    <citation type="journal article" date="2005" name="Nucleic Acids Res.">
        <title>Genome dynamics and diversity of Shigella species, the etiologic agents of bacillary dysentery.</title>
        <authorList>
            <person name="Yang F."/>
            <person name="Yang J."/>
            <person name="Zhang X."/>
            <person name="Chen L."/>
            <person name="Jiang Y."/>
            <person name="Yan Y."/>
            <person name="Tang X."/>
            <person name="Wang J."/>
            <person name="Xiong Z."/>
            <person name="Dong J."/>
            <person name="Xue Y."/>
            <person name="Zhu Y."/>
            <person name="Xu X."/>
            <person name="Sun L."/>
            <person name="Chen S."/>
            <person name="Nie H."/>
            <person name="Peng J."/>
            <person name="Xu J."/>
            <person name="Wang Y."/>
            <person name="Yuan Z."/>
            <person name="Wen Y."/>
            <person name="Yao Z."/>
            <person name="Shen Y."/>
            <person name="Qiang B."/>
            <person name="Hou Y."/>
            <person name="Yu J."/>
            <person name="Jin Q."/>
        </authorList>
    </citation>
    <scope>NUCLEOTIDE SEQUENCE [LARGE SCALE GENOMIC DNA]</scope>
    <source>
        <strain>Ss046</strain>
    </source>
</reference>
<dbReference type="EC" id="2.2.1.2" evidence="2"/>
<dbReference type="EMBL" id="CP000038">
    <property type="protein sequence ID" value="AAZ89173.1"/>
    <property type="molecule type" value="Genomic_DNA"/>
</dbReference>
<dbReference type="SMR" id="Q3YZ89"/>
<dbReference type="KEGG" id="ssn:SSON_2544"/>
<dbReference type="HOGENOM" id="CLU_047470_0_1_6"/>
<dbReference type="UniPathway" id="UPA00115">
    <property type="reaction ID" value="UER00414"/>
</dbReference>
<dbReference type="Proteomes" id="UP000002529">
    <property type="component" value="Chromosome"/>
</dbReference>
<dbReference type="GO" id="GO:0005829">
    <property type="term" value="C:cytosol"/>
    <property type="evidence" value="ECO:0007669"/>
    <property type="project" value="TreeGrafter"/>
</dbReference>
<dbReference type="GO" id="GO:0004801">
    <property type="term" value="F:transaldolase activity"/>
    <property type="evidence" value="ECO:0000250"/>
    <property type="project" value="UniProtKB"/>
</dbReference>
<dbReference type="GO" id="GO:0005975">
    <property type="term" value="P:carbohydrate metabolic process"/>
    <property type="evidence" value="ECO:0007669"/>
    <property type="project" value="InterPro"/>
</dbReference>
<dbReference type="GO" id="GO:0006098">
    <property type="term" value="P:pentose-phosphate shunt"/>
    <property type="evidence" value="ECO:0007669"/>
    <property type="project" value="UniProtKB-UniRule"/>
</dbReference>
<dbReference type="CDD" id="cd00957">
    <property type="entry name" value="Transaldolase_TalAB"/>
    <property type="match status" value="1"/>
</dbReference>
<dbReference type="FunFam" id="3.20.20.70:FF:000002">
    <property type="entry name" value="Transaldolase"/>
    <property type="match status" value="1"/>
</dbReference>
<dbReference type="Gene3D" id="3.20.20.70">
    <property type="entry name" value="Aldolase class I"/>
    <property type="match status" value="1"/>
</dbReference>
<dbReference type="HAMAP" id="MF_00492">
    <property type="entry name" value="Transaldolase_1"/>
    <property type="match status" value="1"/>
</dbReference>
<dbReference type="InterPro" id="IPR013785">
    <property type="entry name" value="Aldolase_TIM"/>
</dbReference>
<dbReference type="InterPro" id="IPR001585">
    <property type="entry name" value="TAL/FSA"/>
</dbReference>
<dbReference type="InterPro" id="IPR004730">
    <property type="entry name" value="Transaldolase_1"/>
</dbReference>
<dbReference type="InterPro" id="IPR018225">
    <property type="entry name" value="Transaldolase_AS"/>
</dbReference>
<dbReference type="NCBIfam" id="NF009001">
    <property type="entry name" value="PRK12346.1"/>
    <property type="match status" value="1"/>
</dbReference>
<dbReference type="NCBIfam" id="TIGR00874">
    <property type="entry name" value="talAB"/>
    <property type="match status" value="1"/>
</dbReference>
<dbReference type="PANTHER" id="PTHR10683">
    <property type="entry name" value="TRANSALDOLASE"/>
    <property type="match status" value="1"/>
</dbReference>
<dbReference type="PANTHER" id="PTHR10683:SF16">
    <property type="entry name" value="TRANSALDOLASE A"/>
    <property type="match status" value="1"/>
</dbReference>
<dbReference type="Pfam" id="PF00923">
    <property type="entry name" value="TAL_FSA"/>
    <property type="match status" value="1"/>
</dbReference>
<dbReference type="SUPFAM" id="SSF51569">
    <property type="entry name" value="Aldolase"/>
    <property type="match status" value="1"/>
</dbReference>
<dbReference type="PROSITE" id="PS01054">
    <property type="entry name" value="TRANSALDOLASE_1"/>
    <property type="match status" value="1"/>
</dbReference>
<dbReference type="PROSITE" id="PS00958">
    <property type="entry name" value="TRANSALDOLASE_2"/>
    <property type="match status" value="1"/>
</dbReference>
<name>TAL2_SHISS</name>
<accession>Q3YZ89</accession>
<comment type="function">
    <text evidence="2">Transaldolase is important for the balance of metabolites in the pentose-phosphate pathway.</text>
</comment>
<comment type="catalytic activity">
    <reaction evidence="2">
        <text>D-sedoheptulose 7-phosphate + D-glyceraldehyde 3-phosphate = D-erythrose 4-phosphate + beta-D-fructose 6-phosphate</text>
        <dbReference type="Rhea" id="RHEA:17053"/>
        <dbReference type="ChEBI" id="CHEBI:16897"/>
        <dbReference type="ChEBI" id="CHEBI:57483"/>
        <dbReference type="ChEBI" id="CHEBI:57634"/>
        <dbReference type="ChEBI" id="CHEBI:59776"/>
        <dbReference type="EC" id="2.2.1.2"/>
    </reaction>
</comment>
<comment type="pathway">
    <text evidence="2">Carbohydrate degradation; pentose phosphate pathway; D-glyceraldehyde 3-phosphate and beta-D-fructose 6-phosphate from D-ribose 5-phosphate and D-xylulose 5-phosphate (non-oxidative stage): step 2/3.</text>
</comment>
<comment type="subunit">
    <text evidence="1">Homodimer.</text>
</comment>
<comment type="subcellular location">
    <subcellularLocation>
        <location evidence="2">Cytoplasm</location>
    </subcellularLocation>
</comment>
<comment type="similarity">
    <text evidence="2">Belongs to the transaldolase family. Type 1 subfamily.</text>
</comment>